<proteinExistence type="inferred from homology"/>
<organism>
    <name type="scientific">Vibrio cholerae serotype O1 (strain ATCC 39541 / Classical Ogawa 395 / O395)</name>
    <dbReference type="NCBI Taxonomy" id="345073"/>
    <lineage>
        <taxon>Bacteria</taxon>
        <taxon>Pseudomonadati</taxon>
        <taxon>Pseudomonadota</taxon>
        <taxon>Gammaproteobacteria</taxon>
        <taxon>Vibrionales</taxon>
        <taxon>Vibrionaceae</taxon>
        <taxon>Vibrio</taxon>
    </lineage>
</organism>
<protein>
    <recommendedName>
        <fullName evidence="1">UPF0260 protein VC0395_A0576/VC395_1072</fullName>
    </recommendedName>
</protein>
<accession>A5F2L8</accession>
<accession>C3LZ68</accession>
<sequence>MSTPFWQSKTLDQMTEAEWESLCDGCGKCCLHKLMDEDTDEIYYTNVACSWLNSDTCSCKDYPNRFSSGEECLKLTRDKIEEFNWLPDTCAYRLLGNGQTLPEWHPLLTGSKDAMHAADESVRGKIVYEVDVIDWEDHIVLMSRD</sequence>
<feature type="chain" id="PRO_1000072727" description="UPF0260 protein VC0395_A0576/VC395_1072">
    <location>
        <begin position="1"/>
        <end position="145"/>
    </location>
</feature>
<dbReference type="EMBL" id="CP000627">
    <property type="protein sequence ID" value="ABQ21092.1"/>
    <property type="molecule type" value="Genomic_DNA"/>
</dbReference>
<dbReference type="EMBL" id="CP001235">
    <property type="protein sequence ID" value="ACP09084.1"/>
    <property type="molecule type" value="Genomic_DNA"/>
</dbReference>
<dbReference type="RefSeq" id="WP_001880862.1">
    <property type="nucleotide sequence ID" value="NZ_JAACZH010000005.1"/>
</dbReference>
<dbReference type="KEGG" id="vco:VC0395_A0576"/>
<dbReference type="KEGG" id="vcr:VC395_1072"/>
<dbReference type="PATRIC" id="fig|345073.21.peg.1040"/>
<dbReference type="eggNOG" id="COG2983">
    <property type="taxonomic scope" value="Bacteria"/>
</dbReference>
<dbReference type="HOGENOM" id="CLU_109769_0_1_6"/>
<dbReference type="OrthoDB" id="9786855at2"/>
<dbReference type="Proteomes" id="UP000000249">
    <property type="component" value="Chromosome 2"/>
</dbReference>
<dbReference type="HAMAP" id="MF_00676">
    <property type="entry name" value="UPF0260"/>
    <property type="match status" value="1"/>
</dbReference>
<dbReference type="InterPro" id="IPR005358">
    <property type="entry name" value="Puta_zinc/iron-chelating_dom"/>
</dbReference>
<dbReference type="InterPro" id="IPR008228">
    <property type="entry name" value="UCP006173"/>
</dbReference>
<dbReference type="NCBIfam" id="NF003501">
    <property type="entry name" value="PRK05170.1-5"/>
    <property type="match status" value="1"/>
</dbReference>
<dbReference type="NCBIfam" id="NF003503">
    <property type="entry name" value="PRK05170.2-1"/>
    <property type="match status" value="1"/>
</dbReference>
<dbReference type="NCBIfam" id="NF003507">
    <property type="entry name" value="PRK05170.2-5"/>
    <property type="match status" value="1"/>
</dbReference>
<dbReference type="PANTHER" id="PTHR37421">
    <property type="entry name" value="UPF0260 PROTEIN YCGN"/>
    <property type="match status" value="1"/>
</dbReference>
<dbReference type="PANTHER" id="PTHR37421:SF1">
    <property type="entry name" value="UPF0260 PROTEIN YCGN"/>
    <property type="match status" value="1"/>
</dbReference>
<dbReference type="Pfam" id="PF03692">
    <property type="entry name" value="CxxCxxCC"/>
    <property type="match status" value="1"/>
</dbReference>
<dbReference type="PIRSF" id="PIRSF006173">
    <property type="entry name" value="UCP006173"/>
    <property type="match status" value="1"/>
</dbReference>
<reference key="1">
    <citation type="submission" date="2007-03" db="EMBL/GenBank/DDBJ databases">
        <authorList>
            <person name="Heidelberg J."/>
        </authorList>
    </citation>
    <scope>NUCLEOTIDE SEQUENCE [LARGE SCALE GENOMIC DNA]</scope>
    <source>
        <strain>ATCC 39541 / Classical Ogawa 395 / O395</strain>
    </source>
</reference>
<reference key="2">
    <citation type="journal article" date="2008" name="PLoS ONE">
        <title>A recalibrated molecular clock and independent origins for the cholera pandemic clones.</title>
        <authorList>
            <person name="Feng L."/>
            <person name="Reeves P.R."/>
            <person name="Lan R."/>
            <person name="Ren Y."/>
            <person name="Gao C."/>
            <person name="Zhou Z."/>
            <person name="Ren Y."/>
            <person name="Cheng J."/>
            <person name="Wang W."/>
            <person name="Wang J."/>
            <person name="Qian W."/>
            <person name="Li D."/>
            <person name="Wang L."/>
        </authorList>
    </citation>
    <scope>NUCLEOTIDE SEQUENCE [LARGE SCALE GENOMIC DNA]</scope>
    <source>
        <strain>ATCC 39541 / Classical Ogawa 395 / O395</strain>
    </source>
</reference>
<name>Y1776_VIBC3</name>
<comment type="similarity">
    <text evidence="1">Belongs to the UPF0260 family.</text>
</comment>
<evidence type="ECO:0000255" key="1">
    <source>
        <dbReference type="HAMAP-Rule" id="MF_00676"/>
    </source>
</evidence>
<gene>
    <name type="ordered locus">VC0395_A0576</name>
    <name type="ordered locus">VC395_1072</name>
</gene>